<evidence type="ECO:0000250" key="1"/>
<evidence type="ECO:0000255" key="2"/>
<evidence type="ECO:0000305" key="3"/>
<organism>
    <name type="scientific">Bovine adenovirus 2</name>
    <name type="common">BAdV-2</name>
    <name type="synonym">Mastadenovirus bos2</name>
    <dbReference type="NCBI Taxonomy" id="114429"/>
    <lineage>
        <taxon>Viruses</taxon>
        <taxon>Varidnaviria</taxon>
        <taxon>Bamfordvirae</taxon>
        <taxon>Preplasmiviricota</taxon>
        <taxon>Tectiliviricetes</taxon>
        <taxon>Rowavirales</taxon>
        <taxon>Adenoviridae</taxon>
        <taxon>Mastadenovirus</taxon>
        <taxon>Ovine mastadenovirus A</taxon>
    </lineage>
</organism>
<dbReference type="EMBL" id="U44123">
    <property type="protein sequence ID" value="AAB16758.1"/>
    <property type="molecule type" value="Genomic_DNA"/>
</dbReference>
<dbReference type="GO" id="GO:0019013">
    <property type="term" value="C:viral nucleocapsid"/>
    <property type="evidence" value="ECO:0007669"/>
    <property type="project" value="InterPro"/>
</dbReference>
<dbReference type="GO" id="GO:0003677">
    <property type="term" value="F:DNA binding"/>
    <property type="evidence" value="ECO:0007669"/>
    <property type="project" value="UniProtKB-KW"/>
</dbReference>
<dbReference type="InterPro" id="IPR008393">
    <property type="entry name" value="Adenovirus_late_L2_mu_core"/>
</dbReference>
<dbReference type="Pfam" id="PF05829">
    <property type="entry name" value="Adeno_PX"/>
    <property type="match status" value="1"/>
</dbReference>
<protein>
    <recommendedName>
        <fullName>Late L2 mu core protein</fullName>
    </recommendedName>
    <alternativeName>
        <fullName>Protein X</fullName>
        <shortName>pX</shortName>
    </alternativeName>
    <alternativeName>
        <fullName>pMu</fullName>
    </alternativeName>
</protein>
<accession>Q96626</accession>
<reference key="1">
    <citation type="journal article" date="2000" name="Virus Res.">
        <title>Identification and sequence analysis of the core protein genes of bovine adenovirus 2.</title>
        <authorList>
            <person name="Rusvai M."/>
            <person name="Harrach B."/>
            <person name="Banrevi A."/>
            <person name="Evans P.S."/>
            <person name="Benko M."/>
        </authorList>
    </citation>
    <scope>NUCLEOTIDE SEQUENCE [GENOMIC DNA]</scope>
</reference>
<comment type="function">
    <text evidence="1">The role of the precursor might be to condense the viral prochromatin for encapsidation by virtue of the two basic domains.</text>
</comment>
<comment type="subcellular location">
    <subcellularLocation>
        <location evidence="3">Virion</location>
    </subcellularLocation>
</comment>
<comment type="similarity">
    <text evidence="3">Belongs to the adenoviridae pX family.</text>
</comment>
<proteinExistence type="inferred from homology"/>
<sequence length="70" mass="7769">MTGVPRVTYRVRVPVRTRVLRPRRHGRLVRRVARRKSMRGGFLPFLVPLIAAAIGAAPGIASVALQASRR</sequence>
<name>L2MU_ADEB2</name>
<organismHost>
    <name type="scientific">Bos taurus</name>
    <name type="common">Bovine</name>
    <dbReference type="NCBI Taxonomy" id="9913"/>
</organismHost>
<gene>
    <name type="primary">PX</name>
</gene>
<feature type="propeptide" id="PRO_0000036528" evidence="1">
    <location>
        <begin position="1"/>
        <end position="26"/>
    </location>
</feature>
<feature type="peptide" id="PRO_0000036529" description="Late L2 mu core protein">
    <location>
        <begin position="27"/>
        <end position="41"/>
    </location>
</feature>
<feature type="propeptide" id="PRO_0000036530" evidence="1">
    <location>
        <begin position="42"/>
        <end position="70"/>
    </location>
</feature>
<feature type="site" description="Cleavage; by adenovirus protease" evidence="2">
    <location>
        <begin position="26"/>
        <end position="27"/>
    </location>
</feature>
<feature type="site" description="Cleavage; by adenovirus protease" evidence="2">
    <location>
        <begin position="41"/>
        <end position="42"/>
    </location>
</feature>
<keyword id="KW-0238">DNA-binding</keyword>
<keyword id="KW-0426">Late protein</keyword>
<keyword id="KW-0946">Virion</keyword>